<protein>
    <recommendedName>
        <fullName>Protein 6b</fullName>
    </recommendedName>
</protein>
<accession>P25019</accession>
<proteinExistence type="predicted"/>
<keyword id="KW-0192">Crown gall tumor</keyword>
<keyword id="KW-0614">Plasmid</keyword>
<dbReference type="EMBL" id="X56185">
    <property type="protein sequence ID" value="CAA39648.1"/>
    <property type="molecule type" value="Genomic_DNA"/>
</dbReference>
<dbReference type="EMBL" id="U83987">
    <property type="protein sequence ID" value="AAB41876.1"/>
    <property type="molecule type" value="Genomic_DNA"/>
</dbReference>
<dbReference type="PIR" id="S15451">
    <property type="entry name" value="BWAG6B"/>
</dbReference>
<dbReference type="RefSeq" id="WP_032488313.1">
    <property type="nucleotide sequence ID" value="NZ_WPHX01000055.1"/>
</dbReference>
<dbReference type="SMR" id="P25019"/>
<dbReference type="OrthoDB" id="8297468at2"/>
<dbReference type="InterPro" id="IPR006064">
    <property type="entry name" value="Glycosidase"/>
</dbReference>
<dbReference type="Pfam" id="PF02027">
    <property type="entry name" value="RolB_RolC"/>
    <property type="match status" value="1"/>
</dbReference>
<feature type="chain" id="PRO_0000064398" description="Protein 6b">
    <location>
        <begin position="1"/>
        <end position="207"/>
    </location>
</feature>
<comment type="function">
    <text>Involved in tumor formation and increases auxin and cytokinin effects in host plants.</text>
</comment>
<geneLocation type="plasmid">
    <name>pTiTM4</name>
</geneLocation>
<name>6B2_AGRVI</name>
<reference key="1">
    <citation type="journal article" date="1991" name="Plant Mol. Biol.">
        <title>Sequence of Agrobacterium tumefaciens biotype III auxin genes.</title>
        <authorList>
            <person name="Bonnard G."/>
            <person name="Vincent F."/>
            <person name="Otten L."/>
        </authorList>
    </citation>
    <scope>NUCLEOTIDE SEQUENCE [GENOMIC DNA]</scope>
    <source>
        <strain>TM4</strain>
    </source>
</reference>
<reference key="2">
    <citation type="submission" date="1997-02" db="EMBL/GenBank/DDBJ databases">
        <authorList>
            <person name="Otten L."/>
            <person name="de Ruffray P."/>
        </authorList>
    </citation>
    <scope>NUCLEOTIDE SEQUENCE [GENOMIC DNA]</scope>
    <source>
        <strain>CG474</strain>
    </source>
</reference>
<sequence>MTVANWQVRDFTRILNAGELQGRLEQARTDFGALLAEIVYFHPPGATPEEGDDEYILTGQGLVYVYLSEQTARQCALNRLLPSNSSNFGTVVTAIPPWLMDTQTLNLTLQERCDQGGIVNYYHGSRTNEFFLAIMLSNCFVRFGTDEINGASYGFYARRGNYTEEGEDDDNEIGDEGEAGGAEIRDYQFGDLVNYPIVALGSSRLSA</sequence>
<gene>
    <name type="primary">6b</name>
</gene>
<organism>
    <name type="scientific">Agrobacterium vitis</name>
    <name type="common">Rhizobium vitis</name>
    <dbReference type="NCBI Taxonomy" id="373"/>
    <lineage>
        <taxon>Bacteria</taxon>
        <taxon>Pseudomonadati</taxon>
        <taxon>Pseudomonadota</taxon>
        <taxon>Alphaproteobacteria</taxon>
        <taxon>Hyphomicrobiales</taxon>
        <taxon>Rhizobiaceae</taxon>
        <taxon>Rhizobium/Agrobacterium group</taxon>
        <taxon>Agrobacterium</taxon>
    </lineage>
</organism>